<gene>
    <name type="ordered locus">PC1_1142</name>
</gene>
<evidence type="ECO:0000255" key="1">
    <source>
        <dbReference type="HAMAP-Rule" id="MF_01874"/>
    </source>
</evidence>
<organism>
    <name type="scientific">Pectobacterium carotovorum subsp. carotovorum (strain PC1)</name>
    <dbReference type="NCBI Taxonomy" id="561230"/>
    <lineage>
        <taxon>Bacteria</taxon>
        <taxon>Pseudomonadati</taxon>
        <taxon>Pseudomonadota</taxon>
        <taxon>Gammaproteobacteria</taxon>
        <taxon>Enterobacterales</taxon>
        <taxon>Pectobacteriaceae</taxon>
        <taxon>Pectobacterium</taxon>
    </lineage>
</organism>
<protein>
    <recommendedName>
        <fullName evidence="1">UPF0756 membrane protein PC1_1142</fullName>
    </recommendedName>
</protein>
<comment type="subcellular location">
    <subcellularLocation>
        <location evidence="1">Cell membrane</location>
        <topology evidence="1">Multi-pass membrane protein</topology>
    </subcellularLocation>
</comment>
<comment type="similarity">
    <text evidence="1">Belongs to the UPF0756 family.</text>
</comment>
<name>Y1142_PECCP</name>
<keyword id="KW-1003">Cell membrane</keyword>
<keyword id="KW-0472">Membrane</keyword>
<keyword id="KW-0812">Transmembrane</keyword>
<keyword id="KW-1133">Transmembrane helix</keyword>
<accession>C6DBS3</accession>
<sequence>MAYLDPTLLILLVLAGLGIISHNMTVTLAILVLLAIRITPLNSYFPWVEKYGLSIGIVILTIGVMAPIASGKITASEVMHSFLHWKSLLAILIGVAVSWLGGRGVSLMSNQPSVVAGLLVGTVMGVALFRGVPVGPLIAAGLLSLLIGKT</sequence>
<feature type="chain" id="PRO_0000388915" description="UPF0756 membrane protein PC1_1142">
    <location>
        <begin position="1"/>
        <end position="150"/>
    </location>
</feature>
<feature type="transmembrane region" description="Helical" evidence="1">
    <location>
        <begin position="1"/>
        <end position="21"/>
    </location>
</feature>
<feature type="transmembrane region" description="Helical" evidence="1">
    <location>
        <begin position="51"/>
        <end position="71"/>
    </location>
</feature>
<feature type="transmembrane region" description="Helical" evidence="1">
    <location>
        <begin position="82"/>
        <end position="102"/>
    </location>
</feature>
<feature type="transmembrane region" description="Helical" evidence="1">
    <location>
        <begin position="127"/>
        <end position="147"/>
    </location>
</feature>
<reference key="1">
    <citation type="submission" date="2009-07" db="EMBL/GenBank/DDBJ databases">
        <title>Complete sequence of Pectobacterium carotovorum subsp. carotovorum PC1.</title>
        <authorList>
            <consortium name="US DOE Joint Genome Institute"/>
            <person name="Lucas S."/>
            <person name="Copeland A."/>
            <person name="Lapidus A."/>
            <person name="Glavina del Rio T."/>
            <person name="Tice H."/>
            <person name="Bruce D."/>
            <person name="Goodwin L."/>
            <person name="Pitluck S."/>
            <person name="Munk A.C."/>
            <person name="Brettin T."/>
            <person name="Detter J.C."/>
            <person name="Han C."/>
            <person name="Tapia R."/>
            <person name="Larimer F."/>
            <person name="Land M."/>
            <person name="Hauser L."/>
            <person name="Kyrpides N."/>
            <person name="Mikhailova N."/>
            <person name="Balakrishnan V."/>
            <person name="Glasner J."/>
            <person name="Perna N.T."/>
        </authorList>
    </citation>
    <scope>NUCLEOTIDE SEQUENCE [LARGE SCALE GENOMIC DNA]</scope>
    <source>
        <strain>PC1</strain>
    </source>
</reference>
<proteinExistence type="inferred from homology"/>
<dbReference type="EMBL" id="CP001657">
    <property type="protein sequence ID" value="ACT12190.1"/>
    <property type="molecule type" value="Genomic_DNA"/>
</dbReference>
<dbReference type="RefSeq" id="WP_015839429.1">
    <property type="nucleotide sequence ID" value="NC_012917.1"/>
</dbReference>
<dbReference type="STRING" id="561230.PC1_1142"/>
<dbReference type="KEGG" id="pct:PC1_1142"/>
<dbReference type="eggNOG" id="COG2707">
    <property type="taxonomic scope" value="Bacteria"/>
</dbReference>
<dbReference type="HOGENOM" id="CLU_125889_0_0_6"/>
<dbReference type="OrthoDB" id="80306at2"/>
<dbReference type="Proteomes" id="UP000002736">
    <property type="component" value="Chromosome"/>
</dbReference>
<dbReference type="GO" id="GO:0005886">
    <property type="term" value="C:plasma membrane"/>
    <property type="evidence" value="ECO:0007669"/>
    <property type="project" value="UniProtKB-SubCell"/>
</dbReference>
<dbReference type="HAMAP" id="MF_01874">
    <property type="entry name" value="UPF0756"/>
    <property type="match status" value="1"/>
</dbReference>
<dbReference type="InterPro" id="IPR007382">
    <property type="entry name" value="UPF0756_TM"/>
</dbReference>
<dbReference type="PANTHER" id="PTHR38452">
    <property type="entry name" value="UPF0756 MEMBRANE PROTEIN YEAL"/>
    <property type="match status" value="1"/>
</dbReference>
<dbReference type="PANTHER" id="PTHR38452:SF1">
    <property type="entry name" value="UPF0756 MEMBRANE PROTEIN YEAL"/>
    <property type="match status" value="1"/>
</dbReference>
<dbReference type="Pfam" id="PF04284">
    <property type="entry name" value="DUF441"/>
    <property type="match status" value="1"/>
</dbReference>